<gene>
    <name evidence="4" type="primary">OMT4</name>
</gene>
<feature type="chain" id="PRO_0000456913" description="Flavonoid 4'-O-methyltransferase 4">
    <location>
        <begin position="1"/>
        <end position="343"/>
    </location>
</feature>
<feature type="active site" description="Proton acceptor" evidence="2">
    <location>
        <position position="249"/>
    </location>
</feature>
<feature type="binding site" evidence="2">
    <location>
        <position position="211"/>
    </location>
    <ligand>
        <name>S-adenosyl-L-methionine</name>
        <dbReference type="ChEBI" id="CHEBI:59789"/>
    </ligand>
</feature>
<proteinExistence type="evidence at protein level"/>
<protein>
    <recommendedName>
        <fullName evidence="4">Flavonoid 4'-O-methyltransferase 4</fullName>
        <shortName evidence="4">MpOMT4</shortName>
        <ecNumber evidence="2 3">2.1.1.-</ecNumber>
    </recommendedName>
    <alternativeName>
        <fullName evidence="6">7,8,4'-trihydroxy-flavone 4'-O-methyltransferase</fullName>
        <ecNumber evidence="3">2.1.1.-</ecNumber>
    </alternativeName>
    <alternativeName>
        <fullName evidence="6">Apigenin 4'-O-methyltransferase</fullName>
        <ecNumber evidence="3">2.1.1.75</ecNumber>
    </alternativeName>
    <alternativeName>
        <fullName evidence="6">Isorhamnetin 4'-O-methyltransferase</fullName>
        <ecNumber evidence="3">2.1.1.-</ecNumber>
    </alternativeName>
    <alternativeName>
        <fullName evidence="6">Kaempferol 4'-O-methyltransferase</fullName>
        <ecNumber evidence="3">2.1.1.155</ecNumber>
    </alternativeName>
    <alternativeName>
        <fullName evidence="6">Naringenin 4'-O-methyltransferase</fullName>
        <ecNumber evidence="3">2.1.1.-</ecNumber>
    </alternativeName>
    <alternativeName>
        <fullName evidence="6">Scutellarein 4'-O-methyltransferase</fullName>
        <ecNumber evidence="3">2.1.1.-</ecNumber>
    </alternativeName>
    <alternativeName>
        <fullName evidence="6">Taxifolin 4'-O-methyltransferase</fullName>
        <ecNumber evidence="3">2.1.1.-</ecNumber>
    </alternativeName>
</protein>
<reference key="1">
    <citation type="journal article" date="2004" name="Phytochemistry">
        <title>Bio-fermentation of modified flavonoids: an example of in vivo diversification of secondary metabolites.</title>
        <authorList>
            <person name="Willits M.G."/>
            <person name="Giovanni M."/>
            <person name="Prata R.T.N."/>
            <person name="Kramer C.M."/>
            <person name="De Luca V."/>
            <person name="Steffens J.C."/>
            <person name="Graser G."/>
        </authorList>
    </citation>
    <scope>NUCLEOTIDE SEQUENCE [MRNA]</scope>
    <scope>FUNCTION</scope>
    <scope>CATALYTIC ACTIVITY</scope>
    <source>
        <tissue>Leaf</tissue>
    </source>
</reference>
<reference key="2">
    <citation type="journal article" date="2019" name="Nat. Prod. Rep.">
        <title>Non-volatile natural products in plant glandular trichomes: chemistry, biological activities and biosynthesis.</title>
        <authorList>
            <person name="Liu Y."/>
            <person name="Jing S.-X."/>
            <person name="Luo S.-H."/>
            <person name="Li S.-H."/>
        </authorList>
    </citation>
    <scope>PATHWAY</scope>
    <scope>REVIEW</scope>
</reference>
<keyword id="KW-0489">Methyltransferase</keyword>
<keyword id="KW-0949">S-adenosyl-L-methionine</keyword>
<keyword id="KW-0808">Transferase</keyword>
<sequence length="343" mass="37821">MVADEEVRVRAEAWNNAFGYIKPTAVATAVELGLPDILENHDGPMSLLELSAATDCPAEPLHRLMRFLVFHGIFKKTAKPPLSNEAVYYARTALSRLFTRDELGDFMLLQTGPLSQHPAGLTASSLRTGKPQFIRSVNGEDSWTDPVNGYHMKVFSDAMAAHARETTAAIVRYCPAAFEGIGTVVDVGGRHGVALEKLVAAFPWVRGISFDLPEIVAKAPPRPGIEFVGGSFFESVPKGDLVLLMWILHDWSDESCIEIMKKCKEAIPTSGKVMIVDAIVDEDGEGDDFAGARLSLDLIMMAVLARGKERTYREWEYLLREAGFTKFVVKNINTVEFVIEAYP</sequence>
<dbReference type="EC" id="2.1.1.-" evidence="2 3"/>
<dbReference type="EC" id="2.1.1.75" evidence="3"/>
<dbReference type="EC" id="2.1.1.155" evidence="3"/>
<dbReference type="EMBL" id="AY337461">
    <property type="protein sequence ID" value="AAR09602.1"/>
    <property type="molecule type" value="mRNA"/>
</dbReference>
<dbReference type="SMR" id="Q6VMV8"/>
<dbReference type="GO" id="GO:0008171">
    <property type="term" value="F:O-methyltransferase activity"/>
    <property type="evidence" value="ECO:0007669"/>
    <property type="project" value="InterPro"/>
</dbReference>
<dbReference type="GO" id="GO:0046983">
    <property type="term" value="F:protein dimerization activity"/>
    <property type="evidence" value="ECO:0007669"/>
    <property type="project" value="InterPro"/>
</dbReference>
<dbReference type="GO" id="GO:0032259">
    <property type="term" value="P:methylation"/>
    <property type="evidence" value="ECO:0007669"/>
    <property type="project" value="UniProtKB-KW"/>
</dbReference>
<dbReference type="Gene3D" id="3.40.50.150">
    <property type="entry name" value="Vaccinia Virus protein VP39"/>
    <property type="match status" value="1"/>
</dbReference>
<dbReference type="Gene3D" id="1.10.10.10">
    <property type="entry name" value="Winged helix-like DNA-binding domain superfamily/Winged helix DNA-binding domain"/>
    <property type="match status" value="1"/>
</dbReference>
<dbReference type="InterPro" id="IPR016461">
    <property type="entry name" value="COMT-like"/>
</dbReference>
<dbReference type="InterPro" id="IPR001077">
    <property type="entry name" value="O_MeTrfase_dom"/>
</dbReference>
<dbReference type="InterPro" id="IPR012967">
    <property type="entry name" value="Plant_O-MeTrfase_dimerisation"/>
</dbReference>
<dbReference type="InterPro" id="IPR029063">
    <property type="entry name" value="SAM-dependent_MTases_sf"/>
</dbReference>
<dbReference type="InterPro" id="IPR036388">
    <property type="entry name" value="WH-like_DNA-bd_sf"/>
</dbReference>
<dbReference type="InterPro" id="IPR036390">
    <property type="entry name" value="WH_DNA-bd_sf"/>
</dbReference>
<dbReference type="PANTHER" id="PTHR11746">
    <property type="entry name" value="O-METHYLTRANSFERASE"/>
    <property type="match status" value="1"/>
</dbReference>
<dbReference type="Pfam" id="PF08100">
    <property type="entry name" value="Dimerisation"/>
    <property type="match status" value="1"/>
</dbReference>
<dbReference type="Pfam" id="PF00891">
    <property type="entry name" value="Methyltransf_2"/>
    <property type="match status" value="1"/>
</dbReference>
<dbReference type="PIRSF" id="PIRSF005739">
    <property type="entry name" value="O-mtase"/>
    <property type="match status" value="1"/>
</dbReference>
<dbReference type="SUPFAM" id="SSF53335">
    <property type="entry name" value="S-adenosyl-L-methionine-dependent methyltransferases"/>
    <property type="match status" value="1"/>
</dbReference>
<dbReference type="SUPFAM" id="SSF46785">
    <property type="entry name" value="Winged helix' DNA-binding domain"/>
    <property type="match status" value="1"/>
</dbReference>
<dbReference type="PROSITE" id="PS51683">
    <property type="entry name" value="SAM_OMT_II"/>
    <property type="match status" value="1"/>
</dbReference>
<evidence type="ECO:0000250" key="1">
    <source>
        <dbReference type="UniProtKB" id="Q7XB10"/>
    </source>
</evidence>
<evidence type="ECO:0000255" key="2">
    <source>
        <dbReference type="PROSITE-ProRule" id="PRU01020"/>
    </source>
</evidence>
<evidence type="ECO:0000269" key="3">
    <source>
    </source>
</evidence>
<evidence type="ECO:0000303" key="4">
    <source>
    </source>
</evidence>
<evidence type="ECO:0000303" key="5">
    <source>
    </source>
</evidence>
<evidence type="ECO:0000305" key="6">
    <source>
    </source>
</evidence>
<organism>
    <name type="scientific">Mentha piperita</name>
    <name type="common">Peppermint</name>
    <name type="synonym">Mentha aquatica x Mentha spicata</name>
    <dbReference type="NCBI Taxonomy" id="34256"/>
    <lineage>
        <taxon>Eukaryota</taxon>
        <taxon>Viridiplantae</taxon>
        <taxon>Streptophyta</taxon>
        <taxon>Embryophyta</taxon>
        <taxon>Tracheophyta</taxon>
        <taxon>Spermatophyta</taxon>
        <taxon>Magnoliopsida</taxon>
        <taxon>eudicotyledons</taxon>
        <taxon>Gunneridae</taxon>
        <taxon>Pentapetalae</taxon>
        <taxon>asterids</taxon>
        <taxon>lamiids</taxon>
        <taxon>Lamiales</taxon>
        <taxon>Lamiaceae</taxon>
        <taxon>Nepetoideae</taxon>
        <taxon>Mentheae</taxon>
        <taxon>Menthinae</taxon>
        <taxon>Mentha</taxon>
    </lineage>
</organism>
<accession>Q6VMV8</accession>
<name>OMT4_MENPI</name>
<comment type="function">
    <text evidence="3">Flavonoid 4'-O-methyltransferase involved in the biosynthesis of polymethoxylated flavonoids natural products such as pebrellin, aroma compounds which contribute to the flavor of peppermint, and exhibit pharmacological activities such as anti-allergic, anti-oxidant, antibacterial, anti-proliferative, and anti-inflammatory effects (PubMed:14697269). Catalyzes S-adenosylmethionine-dependent regioselective 4'-O-methylation of flavonoids; active on various hydroxylated flavonoid substrates, including isorhamnetin, kaempferol, apigenin (API), scutellarein (6-hydroxy-apigenin, 6-OH-API, SCU), taxifolin, 7,8,4'-trihydroxy-flavone and naringenin (NAR), and, with a lower efficiency, quercetin, rhamnetin, luteolin (LUT) and 7,8,3',4'-tetrahydroxy-flavone (PubMed:14697269).</text>
</comment>
<comment type="catalytic activity">
    <reaction evidence="3">
        <text>apigenin + S-adenosyl-L-methionine = acacetin + S-adenosyl-L-homocysteine + H(+)</text>
        <dbReference type="Rhea" id="RHEA:20429"/>
        <dbReference type="ChEBI" id="CHEBI:15378"/>
        <dbReference type="ChEBI" id="CHEBI:57284"/>
        <dbReference type="ChEBI" id="CHEBI:57856"/>
        <dbReference type="ChEBI" id="CHEBI:58470"/>
        <dbReference type="ChEBI" id="CHEBI:59789"/>
        <dbReference type="EC" id="2.1.1.75"/>
    </reaction>
    <physiologicalReaction direction="left-to-right" evidence="6">
        <dbReference type="Rhea" id="RHEA:20430"/>
    </physiologicalReaction>
</comment>
<comment type="catalytic activity">
    <reaction evidence="3">
        <text>kaempferol + S-adenosyl-L-methionine = kaempferide + S-adenosyl-L-homocysteine + H(+)</text>
        <dbReference type="Rhea" id="RHEA:15105"/>
        <dbReference type="ChEBI" id="CHEBI:15378"/>
        <dbReference type="ChEBI" id="CHEBI:57856"/>
        <dbReference type="ChEBI" id="CHEBI:58573"/>
        <dbReference type="ChEBI" id="CHEBI:58925"/>
        <dbReference type="ChEBI" id="CHEBI:59789"/>
        <dbReference type="EC" id="2.1.1.155"/>
    </reaction>
    <physiologicalReaction direction="left-to-right" evidence="6">
        <dbReference type="Rhea" id="RHEA:15106"/>
    </physiologicalReaction>
</comment>
<comment type="catalytic activity">
    <reaction evidence="3">
        <text>isorhamnetin + S-adenosyl-L-methionine = 3',4'-O-dimethylquercetin + S-adenosyl-L-homocysteine + 2 H(+)</text>
        <dbReference type="Rhea" id="RHEA:74723"/>
        <dbReference type="ChEBI" id="CHEBI:15378"/>
        <dbReference type="ChEBI" id="CHEBI:57856"/>
        <dbReference type="ChEBI" id="CHEBI:59789"/>
        <dbReference type="ChEBI" id="CHEBI:144055"/>
        <dbReference type="ChEBI" id="CHEBI:194064"/>
    </reaction>
    <physiologicalReaction direction="left-to-right" evidence="6">
        <dbReference type="Rhea" id="RHEA:74724"/>
    </physiologicalReaction>
</comment>
<comment type="catalytic activity">
    <reaction evidence="3">
        <text>scutellarein + S-adenosyl-L-methionine = scutellarein 4'-methyl ether + S-adenosyl-L-homocysteine + H(+)</text>
        <dbReference type="Rhea" id="RHEA:73179"/>
        <dbReference type="ChEBI" id="CHEBI:15378"/>
        <dbReference type="ChEBI" id="CHEBI:57856"/>
        <dbReference type="ChEBI" id="CHEBI:59789"/>
        <dbReference type="ChEBI" id="CHEBI:78328"/>
        <dbReference type="ChEBI" id="CHEBI:192755"/>
    </reaction>
    <physiologicalReaction direction="left-to-right" evidence="6">
        <dbReference type="Rhea" id="RHEA:73180"/>
    </physiologicalReaction>
</comment>
<comment type="catalytic activity">
    <reaction evidence="3">
        <text>(2S)-naringenin + S-adenosyl-L-methionine = (2S)-naringenin 4'-methyl ether + S-adenosyl-L-homocysteine + H(+)</text>
        <dbReference type="Rhea" id="RHEA:73287"/>
        <dbReference type="ChEBI" id="CHEBI:15378"/>
        <dbReference type="ChEBI" id="CHEBI:17846"/>
        <dbReference type="ChEBI" id="CHEBI:27552"/>
        <dbReference type="ChEBI" id="CHEBI:57856"/>
        <dbReference type="ChEBI" id="CHEBI:59789"/>
    </reaction>
    <physiologicalReaction direction="left-to-right" evidence="6">
        <dbReference type="Rhea" id="RHEA:73288"/>
    </physiologicalReaction>
</comment>
<comment type="catalytic activity">
    <reaction evidence="3">
        <text>4',7,8-trihydroxyflavone + S-adenosyl-L-methionine = 7,8-dihydroxy-4'-methoxyflavone + S-adenosyl-L-homocysteine + H(+)</text>
        <dbReference type="Rhea" id="RHEA:73295"/>
        <dbReference type="ChEBI" id="CHEBI:15378"/>
        <dbReference type="ChEBI" id="CHEBI:57856"/>
        <dbReference type="ChEBI" id="CHEBI:59789"/>
        <dbReference type="ChEBI" id="CHEBI:192709"/>
        <dbReference type="ChEBI" id="CHEBI:192777"/>
    </reaction>
    <physiologicalReaction direction="left-to-right" evidence="6">
        <dbReference type="Rhea" id="RHEA:73296"/>
    </physiologicalReaction>
</comment>
<comment type="catalytic activity">
    <reaction evidence="3">
        <text>taxifolin + S-adenosyl-L-methionine = taxifolin 4'-methyl ether + S-adenosyl-L-homocysteine + H(+)</text>
        <dbReference type="Rhea" id="RHEA:74183"/>
        <dbReference type="ChEBI" id="CHEBI:15378"/>
        <dbReference type="ChEBI" id="CHEBI:38747"/>
        <dbReference type="ChEBI" id="CHEBI:57856"/>
        <dbReference type="ChEBI" id="CHEBI:59789"/>
        <dbReference type="ChEBI" id="CHEBI:193113"/>
    </reaction>
    <physiologicalReaction direction="left-to-right" evidence="6">
        <dbReference type="Rhea" id="RHEA:74184"/>
    </physiologicalReaction>
</comment>
<comment type="pathway">
    <text evidence="5">Flavonoid metabolism.</text>
</comment>
<comment type="subunit">
    <text evidence="1">Homodimer.</text>
</comment>
<comment type="similarity">
    <text evidence="2">Belongs to the class I-like SAM-binding methyltransferase superfamily. Cation-independent O-methyltransferase family.</text>
</comment>